<sequence>MIGSLTGIIEEIYNNYIILNVGNVGYIIYVSHKVLQSCKTGNNIKLYIETYVNRDNLTQLYGFLDKQEQDYMRMLVTINGINHKTAISILSKLSPEQIFSAVVSNNKNAFRGNGIGEKLAGRITTELQYKISKMPIEETLIIKEDDSLAALISLGYDKLKAFNAIQEIKANFPDDSIQEIIRKALQKLSQ</sequence>
<accession>Q2GHE2</accession>
<evidence type="ECO:0000255" key="1">
    <source>
        <dbReference type="HAMAP-Rule" id="MF_00031"/>
    </source>
</evidence>
<comment type="function">
    <text evidence="1">The RuvA-RuvB-RuvC complex processes Holliday junction (HJ) DNA during genetic recombination and DNA repair, while the RuvA-RuvB complex plays an important role in the rescue of blocked DNA replication forks via replication fork reversal (RFR). RuvA specifically binds to HJ cruciform DNA, conferring on it an open structure. The RuvB hexamer acts as an ATP-dependent pump, pulling dsDNA into and through the RuvAB complex. HJ branch migration allows RuvC to scan DNA until it finds its consensus sequence, where it cleaves and resolves the cruciform DNA.</text>
</comment>
<comment type="subunit">
    <text evidence="1">Homotetramer. Forms an RuvA(8)-RuvB(12)-Holliday junction (HJ) complex. HJ DNA is sandwiched between 2 RuvA tetramers; dsDNA enters through RuvA and exits via RuvB. An RuvB hexamer assembles on each DNA strand where it exits the tetramer. Each RuvB hexamer is contacted by two RuvA subunits (via domain III) on 2 adjacent RuvB subunits; this complex drives branch migration. In the full resolvosome a probable DNA-RuvA(4)-RuvB(12)-RuvC(2) complex forms which resolves the HJ.</text>
</comment>
<comment type="subcellular location">
    <subcellularLocation>
        <location evidence="1">Cytoplasm</location>
    </subcellularLocation>
</comment>
<comment type="domain">
    <text evidence="1">Has three domains with a flexible linker between the domains II and III and assumes an 'L' shape. Domain III is highly mobile and contacts RuvB.</text>
</comment>
<comment type="similarity">
    <text evidence="1">Belongs to the RuvA family.</text>
</comment>
<dbReference type="EMBL" id="CP000236">
    <property type="protein sequence ID" value="ABD45266.1"/>
    <property type="molecule type" value="Genomic_DNA"/>
</dbReference>
<dbReference type="RefSeq" id="WP_006010827.1">
    <property type="nucleotide sequence ID" value="NC_007799.1"/>
</dbReference>
<dbReference type="SMR" id="Q2GHE2"/>
<dbReference type="STRING" id="205920.ECH_0320"/>
<dbReference type="KEGG" id="ech:ECH_0320"/>
<dbReference type="eggNOG" id="COG0632">
    <property type="taxonomic scope" value="Bacteria"/>
</dbReference>
<dbReference type="HOGENOM" id="CLU_087936_3_0_5"/>
<dbReference type="OrthoDB" id="5293449at2"/>
<dbReference type="Proteomes" id="UP000008320">
    <property type="component" value="Chromosome"/>
</dbReference>
<dbReference type="GO" id="GO:0005737">
    <property type="term" value="C:cytoplasm"/>
    <property type="evidence" value="ECO:0007669"/>
    <property type="project" value="UniProtKB-SubCell"/>
</dbReference>
<dbReference type="GO" id="GO:0009379">
    <property type="term" value="C:Holliday junction helicase complex"/>
    <property type="evidence" value="ECO:0007669"/>
    <property type="project" value="InterPro"/>
</dbReference>
<dbReference type="GO" id="GO:0048476">
    <property type="term" value="C:Holliday junction resolvase complex"/>
    <property type="evidence" value="ECO:0007669"/>
    <property type="project" value="UniProtKB-UniRule"/>
</dbReference>
<dbReference type="GO" id="GO:0005524">
    <property type="term" value="F:ATP binding"/>
    <property type="evidence" value="ECO:0007669"/>
    <property type="project" value="InterPro"/>
</dbReference>
<dbReference type="GO" id="GO:0000400">
    <property type="term" value="F:four-way junction DNA binding"/>
    <property type="evidence" value="ECO:0007669"/>
    <property type="project" value="UniProtKB-UniRule"/>
</dbReference>
<dbReference type="GO" id="GO:0009378">
    <property type="term" value="F:four-way junction helicase activity"/>
    <property type="evidence" value="ECO:0007669"/>
    <property type="project" value="InterPro"/>
</dbReference>
<dbReference type="GO" id="GO:0006310">
    <property type="term" value="P:DNA recombination"/>
    <property type="evidence" value="ECO:0007669"/>
    <property type="project" value="UniProtKB-UniRule"/>
</dbReference>
<dbReference type="GO" id="GO:0006281">
    <property type="term" value="P:DNA repair"/>
    <property type="evidence" value="ECO:0007669"/>
    <property type="project" value="UniProtKB-UniRule"/>
</dbReference>
<dbReference type="CDD" id="cd14332">
    <property type="entry name" value="UBA_RuvA_C"/>
    <property type="match status" value="1"/>
</dbReference>
<dbReference type="Gene3D" id="1.10.150.20">
    <property type="entry name" value="5' to 3' exonuclease, C-terminal subdomain"/>
    <property type="match status" value="1"/>
</dbReference>
<dbReference type="Gene3D" id="1.10.8.10">
    <property type="entry name" value="DNA helicase RuvA subunit, C-terminal domain"/>
    <property type="match status" value="1"/>
</dbReference>
<dbReference type="Gene3D" id="2.40.50.140">
    <property type="entry name" value="Nucleic acid-binding proteins"/>
    <property type="match status" value="1"/>
</dbReference>
<dbReference type="HAMAP" id="MF_00031">
    <property type="entry name" value="DNA_HJ_migration_RuvA"/>
    <property type="match status" value="1"/>
</dbReference>
<dbReference type="InterPro" id="IPR013849">
    <property type="entry name" value="DNA_helicase_Holl-junc_RuvA_I"/>
</dbReference>
<dbReference type="InterPro" id="IPR012340">
    <property type="entry name" value="NA-bd_OB-fold"/>
</dbReference>
<dbReference type="InterPro" id="IPR000085">
    <property type="entry name" value="RuvA"/>
</dbReference>
<dbReference type="InterPro" id="IPR010994">
    <property type="entry name" value="RuvA_2-like"/>
</dbReference>
<dbReference type="InterPro" id="IPR011114">
    <property type="entry name" value="RuvA_C"/>
</dbReference>
<dbReference type="InterPro" id="IPR036267">
    <property type="entry name" value="RuvA_C_sf"/>
</dbReference>
<dbReference type="NCBIfam" id="NF011194">
    <property type="entry name" value="PRK14600.1"/>
    <property type="match status" value="1"/>
</dbReference>
<dbReference type="NCBIfam" id="TIGR00084">
    <property type="entry name" value="ruvA"/>
    <property type="match status" value="1"/>
</dbReference>
<dbReference type="Pfam" id="PF14520">
    <property type="entry name" value="HHH_5"/>
    <property type="match status" value="1"/>
</dbReference>
<dbReference type="Pfam" id="PF07499">
    <property type="entry name" value="RuvA_C"/>
    <property type="match status" value="1"/>
</dbReference>
<dbReference type="Pfam" id="PF01330">
    <property type="entry name" value="RuvA_N"/>
    <property type="match status" value="1"/>
</dbReference>
<dbReference type="SUPFAM" id="SSF46929">
    <property type="entry name" value="DNA helicase RuvA subunit, C-terminal domain"/>
    <property type="match status" value="1"/>
</dbReference>
<dbReference type="SUPFAM" id="SSF50249">
    <property type="entry name" value="Nucleic acid-binding proteins"/>
    <property type="match status" value="1"/>
</dbReference>
<dbReference type="SUPFAM" id="SSF47781">
    <property type="entry name" value="RuvA domain 2-like"/>
    <property type="match status" value="1"/>
</dbReference>
<name>RUVA_EHRCR</name>
<organism>
    <name type="scientific">Ehrlichia chaffeensis (strain ATCC CRL-10679 / Arkansas)</name>
    <dbReference type="NCBI Taxonomy" id="205920"/>
    <lineage>
        <taxon>Bacteria</taxon>
        <taxon>Pseudomonadati</taxon>
        <taxon>Pseudomonadota</taxon>
        <taxon>Alphaproteobacteria</taxon>
        <taxon>Rickettsiales</taxon>
        <taxon>Anaplasmataceae</taxon>
        <taxon>Ehrlichia</taxon>
    </lineage>
</organism>
<protein>
    <recommendedName>
        <fullName evidence="1">Holliday junction branch migration complex subunit RuvA</fullName>
    </recommendedName>
</protein>
<keyword id="KW-0963">Cytoplasm</keyword>
<keyword id="KW-0227">DNA damage</keyword>
<keyword id="KW-0233">DNA recombination</keyword>
<keyword id="KW-0234">DNA repair</keyword>
<keyword id="KW-0238">DNA-binding</keyword>
<keyword id="KW-1185">Reference proteome</keyword>
<reference key="1">
    <citation type="journal article" date="2006" name="PLoS Genet.">
        <title>Comparative genomics of emerging human ehrlichiosis agents.</title>
        <authorList>
            <person name="Dunning Hotopp J.C."/>
            <person name="Lin M."/>
            <person name="Madupu R."/>
            <person name="Crabtree J."/>
            <person name="Angiuoli S.V."/>
            <person name="Eisen J.A."/>
            <person name="Seshadri R."/>
            <person name="Ren Q."/>
            <person name="Wu M."/>
            <person name="Utterback T.R."/>
            <person name="Smith S."/>
            <person name="Lewis M."/>
            <person name="Khouri H."/>
            <person name="Zhang C."/>
            <person name="Niu H."/>
            <person name="Lin Q."/>
            <person name="Ohashi N."/>
            <person name="Zhi N."/>
            <person name="Nelson W.C."/>
            <person name="Brinkac L.M."/>
            <person name="Dodson R.J."/>
            <person name="Rosovitz M.J."/>
            <person name="Sundaram J.P."/>
            <person name="Daugherty S.C."/>
            <person name="Davidsen T."/>
            <person name="Durkin A.S."/>
            <person name="Gwinn M.L."/>
            <person name="Haft D.H."/>
            <person name="Selengut J.D."/>
            <person name="Sullivan S.A."/>
            <person name="Zafar N."/>
            <person name="Zhou L."/>
            <person name="Benahmed F."/>
            <person name="Forberger H."/>
            <person name="Halpin R."/>
            <person name="Mulligan S."/>
            <person name="Robinson J."/>
            <person name="White O."/>
            <person name="Rikihisa Y."/>
            <person name="Tettelin H."/>
        </authorList>
    </citation>
    <scope>NUCLEOTIDE SEQUENCE [LARGE SCALE GENOMIC DNA]</scope>
    <source>
        <strain>ATCC CRL-10679 / Arkansas</strain>
    </source>
</reference>
<proteinExistence type="inferred from homology"/>
<gene>
    <name evidence="1" type="primary">ruvA</name>
    <name type="ordered locus">ECH_0320</name>
</gene>
<feature type="chain" id="PRO_1000002445" description="Holliday junction branch migration complex subunit RuvA">
    <location>
        <begin position="1"/>
        <end position="190"/>
    </location>
</feature>
<feature type="region of interest" description="Domain I" evidence="1">
    <location>
        <begin position="1"/>
        <end position="64"/>
    </location>
</feature>
<feature type="region of interest" description="Domain II" evidence="1">
    <location>
        <begin position="65"/>
        <end position="142"/>
    </location>
</feature>
<feature type="region of interest" description="Domain III" evidence="1">
    <location>
        <begin position="143"/>
        <end position="190"/>
    </location>
</feature>
<feature type="region of interest" description="Flexible linker" evidence="1">
    <location>
        <position position="143"/>
    </location>
</feature>